<dbReference type="EMBL" id="AY266266">
    <property type="protein sequence ID" value="AAP41099.1"/>
    <property type="molecule type" value="mRNA"/>
</dbReference>
<dbReference type="EMBL" id="AY266267">
    <property type="protein sequence ID" value="AAP41100.1"/>
    <property type="molecule type" value="mRNA"/>
</dbReference>
<dbReference type="EMBL" id="AF541279">
    <property type="protein sequence ID" value="AAP57768.1"/>
    <property type="molecule type" value="mRNA"/>
</dbReference>
<dbReference type="EMBL" id="AK129149">
    <property type="protein sequence ID" value="BAC97959.1"/>
    <property type="status" value="ALT_INIT"/>
    <property type="molecule type" value="mRNA"/>
</dbReference>
<dbReference type="EMBL" id="AK046782">
    <property type="protein sequence ID" value="BAC32865.1"/>
    <property type="molecule type" value="mRNA"/>
</dbReference>
<dbReference type="EMBL" id="AK079635">
    <property type="protein sequence ID" value="BAC37711.1"/>
    <property type="status" value="ALT_INIT"/>
    <property type="molecule type" value="mRNA"/>
</dbReference>
<dbReference type="EMBL" id="BC024711">
    <property type="protein sequence ID" value="AAH24711.1"/>
    <property type="molecule type" value="mRNA"/>
</dbReference>
<dbReference type="EMBL" id="BC137701">
    <property type="protein sequence ID" value="AAI37702.1"/>
    <property type="molecule type" value="mRNA"/>
</dbReference>
<dbReference type="EMBL" id="BC137702">
    <property type="protein sequence ID" value="AAI37703.1"/>
    <property type="molecule type" value="mRNA"/>
</dbReference>
<dbReference type="CCDS" id="CCDS17795.1"/>
<dbReference type="RefSeq" id="NP_808332.3">
    <property type="nucleotide sequence ID" value="NM_177664.5"/>
</dbReference>
<dbReference type="SMR" id="Q7TME0"/>
<dbReference type="BioGRID" id="230903">
    <property type="interactions" value="20"/>
</dbReference>
<dbReference type="FunCoup" id="Q7TME0">
    <property type="interactions" value="288"/>
</dbReference>
<dbReference type="IntAct" id="Q7TME0">
    <property type="interactions" value="1"/>
</dbReference>
<dbReference type="STRING" id="10090.ENSMUSP00000052306"/>
<dbReference type="GlyCosmos" id="Q7TME0">
    <property type="glycosylation" value="9 sites, No reported glycans"/>
</dbReference>
<dbReference type="GlyGen" id="Q7TME0">
    <property type="glycosylation" value="11 sites, 2 N-linked glycans (3 sites), 1 O-linked glycan (2 sites)"/>
</dbReference>
<dbReference type="iPTMnet" id="Q7TME0"/>
<dbReference type="PhosphoSitePlus" id="Q7TME0"/>
<dbReference type="SwissPalm" id="Q7TME0"/>
<dbReference type="PaxDb" id="10090-ENSMUSP00000052306"/>
<dbReference type="PeptideAtlas" id="Q7TME0"/>
<dbReference type="ProteomicsDB" id="288264"/>
<dbReference type="Antibodypedia" id="1575">
    <property type="antibodies" value="105 antibodies from 24 providers"/>
</dbReference>
<dbReference type="DNASU" id="229791"/>
<dbReference type="Ensembl" id="ENSMUST00000061071.13">
    <property type="protein sequence ID" value="ENSMUSP00000052306.9"/>
    <property type="gene ID" value="ENSMUSG00000044667.13"/>
</dbReference>
<dbReference type="GeneID" id="229791"/>
<dbReference type="KEGG" id="mmu:229791"/>
<dbReference type="UCSC" id="uc008rcz.2">
    <property type="organism name" value="mouse"/>
</dbReference>
<dbReference type="AGR" id="MGI:106530"/>
<dbReference type="CTD" id="9890"/>
<dbReference type="MGI" id="MGI:106530">
    <property type="gene designation" value="Plppr4"/>
</dbReference>
<dbReference type="VEuPathDB" id="HostDB:ENSMUSG00000044667"/>
<dbReference type="eggNOG" id="KOG3030">
    <property type="taxonomic scope" value="Eukaryota"/>
</dbReference>
<dbReference type="GeneTree" id="ENSGT00940000156181"/>
<dbReference type="HOGENOM" id="CLU_021458_8_0_1"/>
<dbReference type="InParanoid" id="Q7TME0"/>
<dbReference type="OMA" id="EIIMPRS"/>
<dbReference type="OrthoDB" id="8907274at2759"/>
<dbReference type="PhylomeDB" id="Q7TME0"/>
<dbReference type="TreeFam" id="TF316040"/>
<dbReference type="Reactome" id="R-MMU-419408">
    <property type="pathway name" value="Lysosphingolipid and LPA receptors"/>
</dbReference>
<dbReference type="BioGRID-ORCS" id="229791">
    <property type="hits" value="3 hits in 46 CRISPR screens"/>
</dbReference>
<dbReference type="CD-CODE" id="CE726F99">
    <property type="entry name" value="Postsynaptic density"/>
</dbReference>
<dbReference type="ChiTaRS" id="Plppr4">
    <property type="organism name" value="mouse"/>
</dbReference>
<dbReference type="PRO" id="PR:Q7TME0"/>
<dbReference type="Proteomes" id="UP000000589">
    <property type="component" value="Chromosome 3"/>
</dbReference>
<dbReference type="RNAct" id="Q7TME0">
    <property type="molecule type" value="protein"/>
</dbReference>
<dbReference type="Bgee" id="ENSMUSG00000044667">
    <property type="expression patterns" value="Expressed in dorsal striatum and 136 other cell types or tissues"/>
</dbReference>
<dbReference type="ExpressionAtlas" id="Q7TME0">
    <property type="expression patterns" value="baseline and differential"/>
</dbReference>
<dbReference type="GO" id="GO:0098978">
    <property type="term" value="C:glutamatergic synapse"/>
    <property type="evidence" value="ECO:0000314"/>
    <property type="project" value="SynGO"/>
</dbReference>
<dbReference type="GO" id="GO:0098839">
    <property type="term" value="C:postsynaptic density membrane"/>
    <property type="evidence" value="ECO:0000314"/>
    <property type="project" value="UniProtKB"/>
</dbReference>
<dbReference type="GO" id="GO:0098685">
    <property type="term" value="C:Schaffer collateral - CA1 synapse"/>
    <property type="evidence" value="ECO:0000314"/>
    <property type="project" value="SynGO"/>
</dbReference>
<dbReference type="GO" id="GO:0007186">
    <property type="term" value="P:G protein-coupled receptor signaling pathway"/>
    <property type="evidence" value="ECO:0000315"/>
    <property type="project" value="UniProtKB"/>
</dbReference>
<dbReference type="GO" id="GO:0048839">
    <property type="term" value="P:inner ear development"/>
    <property type="evidence" value="ECO:0000314"/>
    <property type="project" value="MGI"/>
</dbReference>
<dbReference type="GO" id="GO:0140354">
    <property type="term" value="P:lipid import into cell"/>
    <property type="evidence" value="ECO:0000315"/>
    <property type="project" value="UniProtKB"/>
</dbReference>
<dbReference type="GO" id="GO:0050804">
    <property type="term" value="P:modulation of chemical synaptic transmission"/>
    <property type="evidence" value="ECO:0000314"/>
    <property type="project" value="SynGO"/>
</dbReference>
<dbReference type="GO" id="GO:0006644">
    <property type="term" value="P:phospholipid metabolic process"/>
    <property type="evidence" value="ECO:0007669"/>
    <property type="project" value="InterPro"/>
</dbReference>
<dbReference type="GO" id="GO:0099175">
    <property type="term" value="P:regulation of postsynapse organization"/>
    <property type="evidence" value="ECO:0000314"/>
    <property type="project" value="SynGO"/>
</dbReference>
<dbReference type="GO" id="GO:0051966">
    <property type="term" value="P:regulation of synaptic transmission, glutamatergic"/>
    <property type="evidence" value="ECO:0000315"/>
    <property type="project" value="UniProtKB"/>
</dbReference>
<dbReference type="CDD" id="cd03384">
    <property type="entry name" value="PAP2_wunen"/>
    <property type="match status" value="1"/>
</dbReference>
<dbReference type="FunFam" id="1.20.144.10:FF:000012">
    <property type="entry name" value="Phospholipid phosphatase-related protein type 4"/>
    <property type="match status" value="1"/>
</dbReference>
<dbReference type="Gene3D" id="1.20.144.10">
    <property type="entry name" value="Phosphatidic acid phosphatase type 2/haloperoxidase"/>
    <property type="match status" value="1"/>
</dbReference>
<dbReference type="InterPro" id="IPR036938">
    <property type="entry name" value="P_Acid_Pase_2/haloperoxi_sf"/>
</dbReference>
<dbReference type="InterPro" id="IPR000326">
    <property type="entry name" value="P_Acid_Pase_2/haloperoxidase"/>
</dbReference>
<dbReference type="InterPro" id="IPR043216">
    <property type="entry name" value="PA_PP_rel"/>
</dbReference>
<dbReference type="PANTHER" id="PTHR10165">
    <property type="entry name" value="LIPID PHOSPHATE PHOSPHATASE"/>
    <property type="match status" value="1"/>
</dbReference>
<dbReference type="PANTHER" id="PTHR10165:SF13">
    <property type="entry name" value="PHOSPHOLIPID PHOSPHATASE-RELATED PROTEIN TYPE 4"/>
    <property type="match status" value="1"/>
</dbReference>
<dbReference type="Pfam" id="PF01569">
    <property type="entry name" value="PAP2"/>
    <property type="match status" value="1"/>
</dbReference>
<dbReference type="SMART" id="SM00014">
    <property type="entry name" value="acidPPc"/>
    <property type="match status" value="1"/>
</dbReference>
<dbReference type="SUPFAM" id="SSF48317">
    <property type="entry name" value="Acid phosphatase/Vanadium-dependent haloperoxidase"/>
    <property type="match status" value="1"/>
</dbReference>
<accession>Q7TME0</accession>
<accession>B2RQ15</accession>
<accession>Q6ZQA8</accession>
<accession>Q8BV73</accession>
<accession>Q8BXK2</accession>
<accession>Q8R3R6</accession>
<feature type="chain" id="PRO_0000317437" description="Phospholipid phosphatase-related protein type 4">
    <location>
        <begin position="1"/>
        <end position="766"/>
    </location>
</feature>
<feature type="transmembrane region" description="Helical" evidence="3">
    <location>
        <begin position="68"/>
        <end position="88"/>
    </location>
</feature>
<feature type="transmembrane region" description="Helical" evidence="3">
    <location>
        <begin position="120"/>
        <end position="140"/>
    </location>
</feature>
<feature type="transmembrane region" description="Helical" evidence="3">
    <location>
        <begin position="179"/>
        <end position="199"/>
    </location>
</feature>
<feature type="transmembrane region" description="Helical" evidence="3">
    <location>
        <begin position="248"/>
        <end position="268"/>
    </location>
</feature>
<feature type="transmembrane region" description="Helical" evidence="3">
    <location>
        <begin position="277"/>
        <end position="297"/>
    </location>
</feature>
<feature type="transmembrane region" description="Helical" evidence="3">
    <location>
        <begin position="309"/>
        <end position="329"/>
    </location>
</feature>
<feature type="region of interest" description="Disordered" evidence="4">
    <location>
        <begin position="454"/>
        <end position="494"/>
    </location>
</feature>
<feature type="region of interest" description="Disordered" evidence="4">
    <location>
        <begin position="634"/>
        <end position="654"/>
    </location>
</feature>
<feature type="region of interest" description="Disordered" evidence="4">
    <location>
        <begin position="672"/>
        <end position="701"/>
    </location>
</feature>
<feature type="region of interest" description="Disordered" evidence="4">
    <location>
        <begin position="742"/>
        <end position="766"/>
    </location>
</feature>
<feature type="compositionally biased region" description="Basic and acidic residues" evidence="4">
    <location>
        <begin position="672"/>
        <end position="697"/>
    </location>
</feature>
<feature type="compositionally biased region" description="Polar residues" evidence="4">
    <location>
        <begin position="743"/>
        <end position="752"/>
    </location>
</feature>
<feature type="modified residue" description="Phosphoserine" evidence="16">
    <location>
        <position position="37"/>
    </location>
</feature>
<feature type="modified residue" description="Phosphoserine" evidence="16">
    <location>
        <position position="347"/>
    </location>
</feature>
<feature type="modified residue" description="Phosphoserine" evidence="1">
    <location>
        <position position="386"/>
    </location>
</feature>
<feature type="modified residue" description="Phosphoserine" evidence="16">
    <location>
        <position position="439"/>
    </location>
</feature>
<feature type="modified residue" description="Phosphoserine" evidence="16">
    <location>
        <position position="462"/>
    </location>
</feature>
<feature type="modified residue" description="Phosphoserine" evidence="1">
    <location>
        <position position="474"/>
    </location>
</feature>
<feature type="modified residue" description="Phosphoserine" evidence="16">
    <location>
        <position position="608"/>
    </location>
</feature>
<feature type="glycosylation site" description="N-linked (GlcNAc...) asparagine" evidence="3">
    <location>
        <position position="215"/>
    </location>
</feature>
<feature type="glycosylation site" description="N-linked (GlcNAc...) asparagine" evidence="3">
    <location>
        <position position="220"/>
    </location>
</feature>
<feature type="glycosylation site" description="N-linked (GlcNAc...) asparagine" evidence="3">
    <location>
        <position position="269"/>
    </location>
</feature>
<feature type="glycosylation site" description="N-linked (GlcNAc...) asparagine" evidence="3">
    <location>
        <position position="363"/>
    </location>
</feature>
<feature type="glycosylation site" description="N-linked (GlcNAc...) asparagine" evidence="3">
    <location>
        <position position="433"/>
    </location>
</feature>
<feature type="glycosylation site" description="N-linked (GlcNAc...) asparagine" evidence="3">
    <location>
        <position position="456"/>
    </location>
</feature>
<feature type="glycosylation site" description="N-linked (GlcNAc...) asparagine" evidence="3">
    <location>
        <position position="515"/>
    </location>
</feature>
<feature type="glycosylation site" description="N-linked (GlcNAc...) asparagine" evidence="3">
    <location>
        <position position="545"/>
    </location>
</feature>
<feature type="glycosylation site" description="N-linked (GlcNAc...) asparagine" evidence="3">
    <location>
        <position position="570"/>
    </location>
</feature>
<feature type="mutagenesis site" description="Loss of function in regulation of glutamatergic synaptic transmission." evidence="6">
    <original>H</original>
    <variation>Q</variation>
    <location>
        <position position="253"/>
    </location>
</feature>
<feature type="mutagenesis site" description="Loss of function in regulation of glutamatergic synaptic transmission." evidence="8">
    <original>T</original>
    <variation>S</variation>
    <location>
        <position position="300"/>
    </location>
</feature>
<feature type="mutagenesis site" description="No effect on localization. Decreased O-glycosylation. Loss of function in LPA internalization into cells. Loss of function in regulation of glutamatergic synaptic transmission." evidence="7 8">
    <original>R</original>
    <variation>T</variation>
    <location>
        <position position="346"/>
    </location>
</feature>
<feature type="mutagenesis site" description="Loss of function in LPA import into cell." evidence="7">
    <original>S</original>
    <variation>A</variation>
    <variation>D</variation>
    <location>
        <position position="347"/>
    </location>
</feature>
<feature type="sequence conflict" description="In Ref. 3; BAC32865." evidence="12" ref="3">
    <original>Q</original>
    <variation>R</variation>
    <location>
        <position position="451"/>
    </location>
</feature>
<feature type="sequence conflict" description="In Ref. 4; AAH24711." evidence="12" ref="4">
    <original>DH</original>
    <variation>ED</variation>
    <location>
        <begin position="495"/>
        <end position="496"/>
    </location>
</feature>
<feature type="sequence conflict" description="In Ref. 4; AAH24711." evidence="12" ref="4">
    <original>G</original>
    <variation>S</variation>
    <location>
        <position position="500"/>
    </location>
</feature>
<feature type="sequence conflict" description="In Ref. 3; BAC32865." evidence="12" ref="3">
    <original>Q</original>
    <variation>K</variation>
    <location>
        <position position="543"/>
    </location>
</feature>
<feature type="sequence conflict" description="In Ref. 1; AAP41099/AAP41100/AAP57768." evidence="12" ref="1">
    <original>A</original>
    <variation>D</variation>
    <location>
        <position position="568"/>
    </location>
</feature>
<feature type="sequence conflict" description="In Ref. 3; BAC37711." evidence="12" ref="3">
    <original>K</original>
    <variation>E</variation>
    <location>
        <position position="653"/>
    </location>
</feature>
<feature type="sequence conflict" description="In Ref. 1; AAP41099/AAP41100/AAP57768." evidence="12" ref="1">
    <original>A</original>
    <variation>V</variation>
    <location>
        <position position="654"/>
    </location>
</feature>
<feature type="sequence conflict" description="In Ref. 3; BAC32865." evidence="12" ref="3">
    <original>I</original>
    <variation>V</variation>
    <location>
        <position position="737"/>
    </location>
</feature>
<keyword id="KW-1003">Cell membrane</keyword>
<keyword id="KW-0325">Glycoprotein</keyword>
<keyword id="KW-0472">Membrane</keyword>
<keyword id="KW-0597">Phosphoprotein</keyword>
<keyword id="KW-0628">Postsynaptic cell membrane</keyword>
<keyword id="KW-1185">Reference proteome</keyword>
<keyword id="KW-0770">Synapse</keyword>
<keyword id="KW-0812">Transmembrane</keyword>
<keyword id="KW-1133">Transmembrane helix</keyword>
<gene>
    <name evidence="15" type="primary">Plppr4</name>
    <name evidence="11" type="synonym">D3Bwg0562e</name>
    <name evidence="10" type="synonym">Kiaa0455</name>
    <name evidence="2" type="synonym">Lppr4</name>
    <name evidence="2" type="synonym">Php1</name>
    <name evidence="9" type="synonym">Prg1</name>
</gene>
<comment type="function">
    <text evidence="1 6 7">Postsynaptic density membrane protein that indirectly regulates glutamatergic synaptic transmission through lysophosphatidic acid (LPA)-mediated signaling pathways (PubMed:19766573). Binds lysophosphatidic acid (LPA) and mediates its internalization into cells (PubMed:26671989). Could act as receptor or a transporter of this lipid at the post-synaptic membrane (PubMed:19766573, PubMed:26671989). Modulates lysophosphatidic acid (LPA) activity in neuron axonal outgrowth during development by attenuating phospholipid-induced axon collapse (By similarity).</text>
</comment>
<comment type="subcellular location">
    <subcellularLocation>
        <location evidence="6 7">Postsynaptic density membrane</location>
        <topology evidence="3">Multi-pass membrane protein</topology>
    </subcellularLocation>
</comment>
<comment type="tissue specificity">
    <text evidence="6">Brain-specific, it is exclusively expressed in neurons (at protein level).</text>
</comment>
<comment type="PTM">
    <text evidence="7">O-glycosylated. Probably at Ser-347.</text>
</comment>
<comment type="disruption phenotype">
    <text evidence="6 7">Knockout mice lacking Plppr4 are viable but show a severe alteration of synaptic transmission leading to juvenile epileptic seizures (PubMed:19766573). Excitatory transmission in CA1 pyramidal neurons is significantly increased (PubMed:19766573). It is associated with transiently reduced weight during development, a reduction in brain size and higher mortality 3 to 4 weeks after birth (PubMed:19766573). Heterozygous knockout mice, show loss of somatosensory filter function and altered resilience during stress-related behaviors (PubMed:26671989).</text>
</comment>
<comment type="similarity">
    <text evidence="12">Belongs to the PA-phosphatase related phosphoesterase family.</text>
</comment>
<comment type="caution">
    <text evidence="5 6">Originally described as a 2-lysophosphatidate/LPA phosphatase (PubMed:12730698). However, following studies suggested it does not have such activity or only a residual one (PubMed:19766573). This is further supported by the fact that the phosphatase sequence motifs as well as the His residue acting as a nucleophile in active phosphatases of the PA-phosphatase related phosphoesterase family are not conserved (PubMed:19766573).</text>
</comment>
<comment type="sequence caution" evidence="12">
    <conflict type="erroneous initiation">
        <sequence resource="EMBL-CDS" id="BAC37711"/>
    </conflict>
</comment>
<comment type="sequence caution" evidence="12">
    <conflict type="erroneous initiation">
        <sequence resource="EMBL-CDS" id="BAC97959"/>
    </conflict>
</comment>
<organism>
    <name type="scientific">Mus musculus</name>
    <name type="common">Mouse</name>
    <dbReference type="NCBI Taxonomy" id="10090"/>
    <lineage>
        <taxon>Eukaryota</taxon>
        <taxon>Metazoa</taxon>
        <taxon>Chordata</taxon>
        <taxon>Craniata</taxon>
        <taxon>Vertebrata</taxon>
        <taxon>Euteleostomi</taxon>
        <taxon>Mammalia</taxon>
        <taxon>Eutheria</taxon>
        <taxon>Euarchontoglires</taxon>
        <taxon>Glires</taxon>
        <taxon>Rodentia</taxon>
        <taxon>Myomorpha</taxon>
        <taxon>Muroidea</taxon>
        <taxon>Muridae</taxon>
        <taxon>Murinae</taxon>
        <taxon>Mus</taxon>
        <taxon>Mus</taxon>
    </lineage>
</organism>
<sequence>MQRAGSSGARGECDISGAGRLRLEQAARLGGRTVHTSPGGGLGARQAAGMSAKERPKGKVIKDSVTLLPCFYFVELPILASSVVSLYFLELTDVFKPVHSGFSCYDRSLSMPYIEPTQEAIPFLMLLSLAFAGPAITIMVGEGILYCCLSKRRNGAGLEPNINAGGCNFNSFLRRAVRFVGVHVFGLCSTALITDIIQLSTGYQAPYFLTVCKPNYTSLNVSCKENSYIVEDICSGSDLTVINSGRKSFPSQHATLAAFAAVYVSMYFNSTLTDSSKLLKPLLVFTFIICGIICGLTRITQYKNHPVDVYCGFLIGGGIALYLGLYAVGNFLPSEDSMLQHRDALRSLTDLNQDPSRVLSAKNGSSGDGIAHTEGILNRNHRDASSLTNLKRANADVEIITPRSPMGKESMVTFSNTLPRANTPSVEDPVRRNASIHASMDSARSKQLLTQWKSKNESRKMSLQVMDTEPEGQSPPRSIEMRSSSEPSRVGVNGDHHVPGNQYLKIQPGTVPGCNNSMPGGPRVSIQSRPGSSQLVHIPEETQENISTSPKSSSARAKWLKAAEKTVACNRSNNQPRIMQVIAMSKQQGVLQSSPKNAEGSTVTCTGSIRYKTLTDHEPSGIVRVEAHPENNRPIIQIPSSTEGEGSGSWKWKAPEKSSLRQTYELNDLNRDSESCESLKDSFGSGDRKRSNIDSNEHHHHGITTIRVTPVEGSEIGSETLSVSSSRDSTLRRKGNIILIPERSNSPENTRNIFYKGTSPTRAYKD</sequence>
<name>PLPR4_MOUSE</name>
<proteinExistence type="evidence at protein level"/>
<protein>
    <recommendedName>
        <fullName evidence="2">Phospholipid phosphatase-related protein type 4</fullName>
    </recommendedName>
    <alternativeName>
        <fullName evidence="2">Brain-specific phosphatidic acid phosphatase-like protein 1</fullName>
    </alternativeName>
    <alternativeName>
        <fullName evidence="14">Inactive 2-lysophosphatidate phosphatase PLPPR4</fullName>
    </alternativeName>
    <alternativeName>
        <fullName evidence="2">Lipid phosphate phosphatase-related protein type 4</fullName>
    </alternativeName>
    <alternativeName>
        <fullName evidence="13">Plasticity-related gene 1 protein</fullName>
        <shortName evidence="9">PRG-1</shortName>
    </alternativeName>
</protein>
<reference key="1">
    <citation type="journal article" date="2003" name="Nat. Neurosci.">
        <title>A new phospholipid phosphatase, PRG-1, is involved in axon growth and regenerative sprouting.</title>
        <authorList>
            <person name="Braeuer A.U."/>
            <person name="Savaskan N.E."/>
            <person name="Kuehn H."/>
            <person name="Prehn S."/>
            <person name="Ninnemann O."/>
            <person name="Nitsch R."/>
        </authorList>
    </citation>
    <scope>NUCLEOTIDE SEQUENCE [MRNA]</scope>
    <scope>CAUTION</scope>
    <source>
        <strain>129/J</strain>
        <strain>BALB/cJ</strain>
        <tissue>Brain</tissue>
        <tissue>Testis</tissue>
    </source>
</reference>
<reference key="2">
    <citation type="journal article" date="2003" name="DNA Res.">
        <title>Prediction of the coding sequences of mouse homologues of KIAA gene: III. The complete nucleotide sequences of 500 mouse KIAA-homologous cDNAs identified by screening of terminal sequences of cDNA clones randomly sampled from size-fractionated libraries.</title>
        <authorList>
            <person name="Okazaki N."/>
            <person name="Kikuno R."/>
            <person name="Ohara R."/>
            <person name="Inamoto S."/>
            <person name="Koseki H."/>
            <person name="Hiraoka S."/>
            <person name="Saga Y."/>
            <person name="Nagase T."/>
            <person name="Ohara O."/>
            <person name="Koga H."/>
        </authorList>
    </citation>
    <scope>NUCLEOTIDE SEQUENCE [LARGE SCALE MRNA]</scope>
    <source>
        <tissue>Brain</tissue>
    </source>
</reference>
<reference key="3">
    <citation type="journal article" date="2005" name="Science">
        <title>The transcriptional landscape of the mammalian genome.</title>
        <authorList>
            <person name="Carninci P."/>
            <person name="Kasukawa T."/>
            <person name="Katayama S."/>
            <person name="Gough J."/>
            <person name="Frith M.C."/>
            <person name="Maeda N."/>
            <person name="Oyama R."/>
            <person name="Ravasi T."/>
            <person name="Lenhard B."/>
            <person name="Wells C."/>
            <person name="Kodzius R."/>
            <person name="Shimokawa K."/>
            <person name="Bajic V.B."/>
            <person name="Brenner S.E."/>
            <person name="Batalov S."/>
            <person name="Forrest A.R."/>
            <person name="Zavolan M."/>
            <person name="Davis M.J."/>
            <person name="Wilming L.G."/>
            <person name="Aidinis V."/>
            <person name="Allen J.E."/>
            <person name="Ambesi-Impiombato A."/>
            <person name="Apweiler R."/>
            <person name="Aturaliya R.N."/>
            <person name="Bailey T.L."/>
            <person name="Bansal M."/>
            <person name="Baxter L."/>
            <person name="Beisel K.W."/>
            <person name="Bersano T."/>
            <person name="Bono H."/>
            <person name="Chalk A.M."/>
            <person name="Chiu K.P."/>
            <person name="Choudhary V."/>
            <person name="Christoffels A."/>
            <person name="Clutterbuck D.R."/>
            <person name="Crowe M.L."/>
            <person name="Dalla E."/>
            <person name="Dalrymple B.P."/>
            <person name="de Bono B."/>
            <person name="Della Gatta G."/>
            <person name="di Bernardo D."/>
            <person name="Down T."/>
            <person name="Engstrom P."/>
            <person name="Fagiolini M."/>
            <person name="Faulkner G."/>
            <person name="Fletcher C.F."/>
            <person name="Fukushima T."/>
            <person name="Furuno M."/>
            <person name="Futaki S."/>
            <person name="Gariboldi M."/>
            <person name="Georgii-Hemming P."/>
            <person name="Gingeras T.R."/>
            <person name="Gojobori T."/>
            <person name="Green R.E."/>
            <person name="Gustincich S."/>
            <person name="Harbers M."/>
            <person name="Hayashi Y."/>
            <person name="Hensch T.K."/>
            <person name="Hirokawa N."/>
            <person name="Hill D."/>
            <person name="Huminiecki L."/>
            <person name="Iacono M."/>
            <person name="Ikeo K."/>
            <person name="Iwama A."/>
            <person name="Ishikawa T."/>
            <person name="Jakt M."/>
            <person name="Kanapin A."/>
            <person name="Katoh M."/>
            <person name="Kawasawa Y."/>
            <person name="Kelso J."/>
            <person name="Kitamura H."/>
            <person name="Kitano H."/>
            <person name="Kollias G."/>
            <person name="Krishnan S.P."/>
            <person name="Kruger A."/>
            <person name="Kummerfeld S.K."/>
            <person name="Kurochkin I.V."/>
            <person name="Lareau L.F."/>
            <person name="Lazarevic D."/>
            <person name="Lipovich L."/>
            <person name="Liu J."/>
            <person name="Liuni S."/>
            <person name="McWilliam S."/>
            <person name="Madan Babu M."/>
            <person name="Madera M."/>
            <person name="Marchionni L."/>
            <person name="Matsuda H."/>
            <person name="Matsuzawa S."/>
            <person name="Miki H."/>
            <person name="Mignone F."/>
            <person name="Miyake S."/>
            <person name="Morris K."/>
            <person name="Mottagui-Tabar S."/>
            <person name="Mulder N."/>
            <person name="Nakano N."/>
            <person name="Nakauchi H."/>
            <person name="Ng P."/>
            <person name="Nilsson R."/>
            <person name="Nishiguchi S."/>
            <person name="Nishikawa S."/>
            <person name="Nori F."/>
            <person name="Ohara O."/>
            <person name="Okazaki Y."/>
            <person name="Orlando V."/>
            <person name="Pang K.C."/>
            <person name="Pavan W.J."/>
            <person name="Pavesi G."/>
            <person name="Pesole G."/>
            <person name="Petrovsky N."/>
            <person name="Piazza S."/>
            <person name="Reed J."/>
            <person name="Reid J.F."/>
            <person name="Ring B.Z."/>
            <person name="Ringwald M."/>
            <person name="Rost B."/>
            <person name="Ruan Y."/>
            <person name="Salzberg S.L."/>
            <person name="Sandelin A."/>
            <person name="Schneider C."/>
            <person name="Schoenbach C."/>
            <person name="Sekiguchi K."/>
            <person name="Semple C.A."/>
            <person name="Seno S."/>
            <person name="Sessa L."/>
            <person name="Sheng Y."/>
            <person name="Shibata Y."/>
            <person name="Shimada H."/>
            <person name="Shimada K."/>
            <person name="Silva D."/>
            <person name="Sinclair B."/>
            <person name="Sperling S."/>
            <person name="Stupka E."/>
            <person name="Sugiura K."/>
            <person name="Sultana R."/>
            <person name="Takenaka Y."/>
            <person name="Taki K."/>
            <person name="Tammoja K."/>
            <person name="Tan S.L."/>
            <person name="Tang S."/>
            <person name="Taylor M.S."/>
            <person name="Tegner J."/>
            <person name="Teichmann S.A."/>
            <person name="Ueda H.R."/>
            <person name="van Nimwegen E."/>
            <person name="Verardo R."/>
            <person name="Wei C.L."/>
            <person name="Yagi K."/>
            <person name="Yamanishi H."/>
            <person name="Zabarovsky E."/>
            <person name="Zhu S."/>
            <person name="Zimmer A."/>
            <person name="Hide W."/>
            <person name="Bult C."/>
            <person name="Grimmond S.M."/>
            <person name="Teasdale R.D."/>
            <person name="Liu E.T."/>
            <person name="Brusic V."/>
            <person name="Quackenbush J."/>
            <person name="Wahlestedt C."/>
            <person name="Mattick J.S."/>
            <person name="Hume D.A."/>
            <person name="Kai C."/>
            <person name="Sasaki D."/>
            <person name="Tomaru Y."/>
            <person name="Fukuda S."/>
            <person name="Kanamori-Katayama M."/>
            <person name="Suzuki M."/>
            <person name="Aoki J."/>
            <person name="Arakawa T."/>
            <person name="Iida J."/>
            <person name="Imamura K."/>
            <person name="Itoh M."/>
            <person name="Kato T."/>
            <person name="Kawaji H."/>
            <person name="Kawagashira N."/>
            <person name="Kawashima T."/>
            <person name="Kojima M."/>
            <person name="Kondo S."/>
            <person name="Konno H."/>
            <person name="Nakano K."/>
            <person name="Ninomiya N."/>
            <person name="Nishio T."/>
            <person name="Okada M."/>
            <person name="Plessy C."/>
            <person name="Shibata K."/>
            <person name="Shiraki T."/>
            <person name="Suzuki S."/>
            <person name="Tagami M."/>
            <person name="Waki K."/>
            <person name="Watahiki A."/>
            <person name="Okamura-Oho Y."/>
            <person name="Suzuki H."/>
            <person name="Kawai J."/>
            <person name="Hayashizaki Y."/>
        </authorList>
    </citation>
    <scope>NUCLEOTIDE SEQUENCE [LARGE SCALE MRNA]</scope>
    <source>
        <strain>C57BL/6J</strain>
        <tissue>Medulla oblongata</tissue>
        <tissue>Spinal cord</tissue>
    </source>
</reference>
<reference key="4">
    <citation type="journal article" date="2004" name="Genome Res.">
        <title>The status, quality, and expansion of the NIH full-length cDNA project: the Mammalian Gene Collection (MGC).</title>
        <authorList>
            <consortium name="The MGC Project Team"/>
        </authorList>
    </citation>
    <scope>NUCLEOTIDE SEQUENCE [LARGE SCALE MRNA]</scope>
    <source>
        <strain>Czech II</strain>
        <tissue>Brain</tissue>
        <tissue>Mammary tumor</tissue>
    </source>
</reference>
<reference key="5">
    <citation type="journal article" date="2010" name="Cell">
        <title>A tissue-specific atlas of mouse protein phosphorylation and expression.</title>
        <authorList>
            <person name="Huttlin E.L."/>
            <person name="Jedrychowski M.P."/>
            <person name="Elias J.E."/>
            <person name="Goswami T."/>
            <person name="Rad R."/>
            <person name="Beausoleil S.A."/>
            <person name="Villen J."/>
            <person name="Haas W."/>
            <person name="Sowa M.E."/>
            <person name="Gygi S.P."/>
        </authorList>
    </citation>
    <scope>PHOSPHORYLATION [LARGE SCALE ANALYSIS] AT SER-37; SER-347; SER-439; SER-462 AND SER-608</scope>
    <scope>IDENTIFICATION BY MASS SPECTROMETRY [LARGE SCALE ANALYSIS]</scope>
    <source>
        <tissue>Brain</tissue>
    </source>
</reference>
<reference key="6">
    <citation type="journal article" date="2009" name="Cell">
        <title>Synaptic PRG-1 modulates excitatory transmission via lipid phosphate-mediated signaling.</title>
        <authorList>
            <person name="Trimbuch T."/>
            <person name="Beed P."/>
            <person name="Vogt J."/>
            <person name="Schuchmann S."/>
            <person name="Maier N."/>
            <person name="Kintscher M."/>
            <person name="Breustedt J."/>
            <person name="Schuelke M."/>
            <person name="Streu N."/>
            <person name="Kieselmann O."/>
            <person name="Brunk I."/>
            <person name="Laube G."/>
            <person name="Strauss U."/>
            <person name="Battefeld A."/>
            <person name="Wende H."/>
            <person name="Birchmeier C."/>
            <person name="Wiese S."/>
            <person name="Sendtner M."/>
            <person name="Kawabe H."/>
            <person name="Kishimoto-Suga M."/>
            <person name="Brose N."/>
            <person name="Baumgart J."/>
            <person name="Geist B."/>
            <person name="Aoki J."/>
            <person name="Savaskan N.E."/>
            <person name="Braeuer A.U."/>
            <person name="Chun J."/>
            <person name="Ninnemann O."/>
            <person name="Schmitz D."/>
            <person name="Nitsch R."/>
        </authorList>
    </citation>
    <scope>FUNCTION</scope>
    <scope>SUBCELLULAR LOCATION</scope>
    <scope>TISSUE SPECIFICITY</scope>
    <scope>DISRUPTION PHENOTYPE</scope>
    <scope>CAUTION</scope>
    <scope>MUTAGENESIS OF HIS-253</scope>
</reference>
<reference key="7">
    <citation type="journal article" date="2016" name="EMBO Mol. Med.">
        <title>Molecular cause and functional impact of altered synaptic lipid signaling due to a prg-1 gene SNP.</title>
        <authorList>
            <person name="Vogt J."/>
            <person name="Yang J.W."/>
            <person name="Mobascher A."/>
            <person name="Cheng J."/>
            <person name="Li Y."/>
            <person name="Liu X."/>
            <person name="Baumgart J."/>
            <person name="Thalman C."/>
            <person name="Kirischuk S."/>
            <person name="Unichenko P."/>
            <person name="Horta G."/>
            <person name="Radyushkin K."/>
            <person name="Stroh A."/>
            <person name="Richers S."/>
            <person name="Sahragard N."/>
            <person name="Distler U."/>
            <person name="Tenzer S."/>
            <person name="Qiao L."/>
            <person name="Lieb K."/>
            <person name="Tuescher O."/>
            <person name="Binder H."/>
            <person name="Ferreiros N."/>
            <person name="Tegeder I."/>
            <person name="Morris A.J."/>
            <person name="Gropa S."/>
            <person name="Nuernberg P."/>
            <person name="Toliat M.R."/>
            <person name="Winterer G."/>
            <person name="Luhmann H.J."/>
            <person name="Huai J."/>
            <person name="Nitsch R."/>
        </authorList>
    </citation>
    <scope>FUNCTION</scope>
    <scope>SUBCELLULAR LOCATION</scope>
    <scope>MUTAGENESIS OF ARG-346 AND SER-347</scope>
    <scope>DISRUPTION PHENOTYPE</scope>
    <scope>GLYCOSYLATION</scope>
</reference>
<reference key="8">
    <citation type="journal article" date="2023" name="Cereb. Cortex">
        <title>Mutations in plasticity-related-gene-1 (PRG-1) protein contribute to hippocampal seizure susceptibility and modify epileptic phenotype.</title>
        <authorList>
            <person name="Knierim E."/>
            <person name="Vogt J."/>
            <person name="Kintscher M."/>
            <person name="Ponomarenko A."/>
            <person name="Baumgart J."/>
            <person name="Beed P."/>
            <person name="Korotkova T."/>
            <person name="Trimbuch T."/>
            <person name="Panzer A."/>
            <person name="Steinlein O.K."/>
            <person name="Stephani U."/>
            <person name="Escayg A."/>
            <person name="Koko M."/>
            <person name="Liu Y."/>
            <person name="Lerche H."/>
            <person name="Schmitz D."/>
            <person name="Nitsch R."/>
            <person name="Schuelke M."/>
        </authorList>
    </citation>
    <scope>MUTAGENESIS OF THR-300 AND ARG-346</scope>
</reference>
<evidence type="ECO:0000250" key="1">
    <source>
        <dbReference type="UniProtKB" id="Q7TMB7"/>
    </source>
</evidence>
<evidence type="ECO:0000250" key="2">
    <source>
        <dbReference type="UniProtKB" id="Q7Z2D5"/>
    </source>
</evidence>
<evidence type="ECO:0000255" key="3"/>
<evidence type="ECO:0000256" key="4">
    <source>
        <dbReference type="SAM" id="MobiDB-lite"/>
    </source>
</evidence>
<evidence type="ECO:0000269" key="5">
    <source>
    </source>
</evidence>
<evidence type="ECO:0000269" key="6">
    <source>
    </source>
</evidence>
<evidence type="ECO:0000269" key="7">
    <source>
    </source>
</evidence>
<evidence type="ECO:0000269" key="8">
    <source>
    </source>
</evidence>
<evidence type="ECO:0000303" key="9">
    <source>
    </source>
</evidence>
<evidence type="ECO:0000303" key="10">
    <source>
    </source>
</evidence>
<evidence type="ECO:0000303" key="11">
    <source>
    </source>
</evidence>
<evidence type="ECO:0000305" key="12"/>
<evidence type="ECO:0000305" key="13">
    <source>
    </source>
</evidence>
<evidence type="ECO:0000305" key="14">
    <source>
    </source>
</evidence>
<evidence type="ECO:0000312" key="15">
    <source>
        <dbReference type="MGI" id="MGI:106530"/>
    </source>
</evidence>
<evidence type="ECO:0007744" key="16">
    <source>
    </source>
</evidence>